<protein>
    <recommendedName>
        <fullName evidence="1">2-phospho-L-lactate guanylyltransferase</fullName>
        <shortName evidence="1">LP guanylyltransferase</shortName>
        <ecNumber evidence="1">2.7.7.68</ecNumber>
    </recommendedName>
</protein>
<sequence>MRFVVPFADRGDRKTRLSSCMDEETRERFALAMLRHVVRVLSKFGEVEVVTPDSSLSVPGTKVRRSDASLDELPLPDGEFGLVMSDLPLLSEEDVERALEGLKDADVVLCPSRRGGTSGVFVRKGVRFRPTFGGVSFPRNLRRAEKQGVEVAVVKSLGFFADVDEPEDLLDAALLGRREVAKIARSVVEV</sequence>
<keyword id="KW-0342">GTP-binding</keyword>
<keyword id="KW-0547">Nucleotide-binding</keyword>
<keyword id="KW-0548">Nucleotidyltransferase</keyword>
<keyword id="KW-1185">Reference proteome</keyword>
<keyword id="KW-0808">Transferase</keyword>
<gene>
    <name evidence="1" type="primary">cofC</name>
    <name type="ordered locus">MK0587</name>
</gene>
<comment type="function">
    <text evidence="1">Guanylyltransferase that catalyzes the activation of (2S)-2-phospholactate (2-PL) as (2S)-lactyl-2-diphospho-5'-guanosine, via the condensation of 2-PL with GTP. It is involved in the biosynthesis of coenzyme F420, a hydride carrier cofactor.</text>
</comment>
<comment type="catalytic activity">
    <reaction evidence="1">
        <text>(2S)-2-phospholactate + GTP + H(+) = (2S)-lactyl-2-diphospho-5'-guanosine + diphosphate</text>
        <dbReference type="Rhea" id="RHEA:63424"/>
        <dbReference type="ChEBI" id="CHEBI:15378"/>
        <dbReference type="ChEBI" id="CHEBI:33019"/>
        <dbReference type="ChEBI" id="CHEBI:37565"/>
        <dbReference type="ChEBI" id="CHEBI:59435"/>
        <dbReference type="ChEBI" id="CHEBI:59906"/>
        <dbReference type="EC" id="2.7.7.68"/>
    </reaction>
</comment>
<comment type="pathway">
    <text evidence="1">Cofactor biosynthesis; coenzyme F420 biosynthesis.</text>
</comment>
<comment type="subunit">
    <text evidence="1">Homodimer.</text>
</comment>
<comment type="similarity">
    <text evidence="1">Belongs to the CofC family.</text>
</comment>
<organism>
    <name type="scientific">Methanopyrus kandleri (strain AV19 / DSM 6324 / JCM 9639 / NBRC 100938)</name>
    <dbReference type="NCBI Taxonomy" id="190192"/>
    <lineage>
        <taxon>Archaea</taxon>
        <taxon>Methanobacteriati</taxon>
        <taxon>Methanobacteriota</taxon>
        <taxon>Methanomada group</taxon>
        <taxon>Methanopyri</taxon>
        <taxon>Methanopyrales</taxon>
        <taxon>Methanopyraceae</taxon>
        <taxon>Methanopyrus</taxon>
    </lineage>
</organism>
<name>COFC_METKA</name>
<reference key="1">
    <citation type="journal article" date="2002" name="Proc. Natl. Acad. Sci. U.S.A.">
        <title>The complete genome of hyperthermophile Methanopyrus kandleri AV19 and monophyly of archaeal methanogens.</title>
        <authorList>
            <person name="Slesarev A.I."/>
            <person name="Mezhevaya K.V."/>
            <person name="Makarova K.S."/>
            <person name="Polushin N.N."/>
            <person name="Shcherbinina O.V."/>
            <person name="Shakhova V.V."/>
            <person name="Belova G.I."/>
            <person name="Aravind L."/>
            <person name="Natale D.A."/>
            <person name="Rogozin I.B."/>
            <person name="Tatusov R.L."/>
            <person name="Wolf Y.I."/>
            <person name="Stetter K.O."/>
            <person name="Malykh A.G."/>
            <person name="Koonin E.V."/>
            <person name="Kozyavkin S.A."/>
        </authorList>
    </citation>
    <scope>NUCLEOTIDE SEQUENCE [LARGE SCALE GENOMIC DNA]</scope>
    <source>
        <strain>AV19 / DSM 6324 / JCM 9639 / NBRC 100938</strain>
    </source>
</reference>
<accession>Q8TXS3</accession>
<feature type="chain" id="PRO_0000398752" description="2-phospho-L-lactate guanylyltransferase">
    <location>
        <begin position="1"/>
        <end position="190"/>
    </location>
</feature>
<evidence type="ECO:0000255" key="1">
    <source>
        <dbReference type="HAMAP-Rule" id="MF_02114"/>
    </source>
</evidence>
<proteinExistence type="inferred from homology"/>
<dbReference type="EC" id="2.7.7.68" evidence="1"/>
<dbReference type="EMBL" id="AE009439">
    <property type="protein sequence ID" value="AAM01802.1"/>
    <property type="molecule type" value="Genomic_DNA"/>
</dbReference>
<dbReference type="RefSeq" id="WP_011018957.1">
    <property type="nucleotide sequence ID" value="NC_003551.1"/>
</dbReference>
<dbReference type="SMR" id="Q8TXS3"/>
<dbReference type="FunCoup" id="Q8TXS3">
    <property type="interactions" value="84"/>
</dbReference>
<dbReference type="STRING" id="190192.MK0587"/>
<dbReference type="PaxDb" id="190192-MK0587"/>
<dbReference type="EnsemblBacteria" id="AAM01802">
    <property type="protein sequence ID" value="AAM01802"/>
    <property type="gene ID" value="MK0587"/>
</dbReference>
<dbReference type="GeneID" id="1476688"/>
<dbReference type="KEGG" id="mka:MK0587"/>
<dbReference type="HOGENOM" id="CLU_1425097_0_0_2"/>
<dbReference type="InParanoid" id="Q8TXS3"/>
<dbReference type="OrthoDB" id="11179at2157"/>
<dbReference type="UniPathway" id="UPA00071"/>
<dbReference type="Proteomes" id="UP000001826">
    <property type="component" value="Chromosome"/>
</dbReference>
<dbReference type="GO" id="GO:0005525">
    <property type="term" value="F:GTP binding"/>
    <property type="evidence" value="ECO:0007669"/>
    <property type="project" value="UniProtKB-KW"/>
</dbReference>
<dbReference type="GO" id="GO:0043814">
    <property type="term" value="F:phospholactate guanylyltransferase activity"/>
    <property type="evidence" value="ECO:0007669"/>
    <property type="project" value="UniProtKB-EC"/>
</dbReference>
<dbReference type="GO" id="GO:0052645">
    <property type="term" value="P:F420-0 metabolic process"/>
    <property type="evidence" value="ECO:0007669"/>
    <property type="project" value="UniProtKB-UniRule"/>
</dbReference>
<dbReference type="Gene3D" id="3.90.550.10">
    <property type="entry name" value="Spore Coat Polysaccharide Biosynthesis Protein SpsA, Chain A"/>
    <property type="match status" value="1"/>
</dbReference>
<dbReference type="HAMAP" id="MF_02114">
    <property type="entry name" value="CofC"/>
    <property type="match status" value="1"/>
</dbReference>
<dbReference type="InterPro" id="IPR002835">
    <property type="entry name" value="CofC"/>
</dbReference>
<dbReference type="InterPro" id="IPR029044">
    <property type="entry name" value="Nucleotide-diphossugar_trans"/>
</dbReference>
<dbReference type="NCBIfam" id="TIGR03552">
    <property type="entry name" value="F420_cofC"/>
    <property type="match status" value="1"/>
</dbReference>
<dbReference type="PANTHER" id="PTHR40392">
    <property type="entry name" value="2-PHOSPHO-L-LACTATE GUANYLYLTRANSFERASE"/>
    <property type="match status" value="1"/>
</dbReference>
<dbReference type="PANTHER" id="PTHR40392:SF1">
    <property type="entry name" value="2-PHOSPHO-L-LACTATE GUANYLYLTRANSFERASE"/>
    <property type="match status" value="1"/>
</dbReference>
<dbReference type="Pfam" id="PF01983">
    <property type="entry name" value="CofC"/>
    <property type="match status" value="1"/>
</dbReference>
<dbReference type="SUPFAM" id="SSF53448">
    <property type="entry name" value="Nucleotide-diphospho-sugar transferases"/>
    <property type="match status" value="1"/>
</dbReference>